<feature type="chain" id="PRO_0000254289" description="ATP synthase subunit beta">
    <location>
        <begin position="1"/>
        <end position="467"/>
    </location>
</feature>
<feature type="binding site" evidence="1">
    <location>
        <begin position="154"/>
        <end position="161"/>
    </location>
    <ligand>
        <name>ATP</name>
        <dbReference type="ChEBI" id="CHEBI:30616"/>
    </ligand>
</feature>
<gene>
    <name evidence="1" type="primary">atpD</name>
    <name type="ordered locus">LA_2776</name>
</gene>
<keyword id="KW-0066">ATP synthesis</keyword>
<keyword id="KW-0067">ATP-binding</keyword>
<keyword id="KW-0997">Cell inner membrane</keyword>
<keyword id="KW-1003">Cell membrane</keyword>
<keyword id="KW-0139">CF(1)</keyword>
<keyword id="KW-0375">Hydrogen ion transport</keyword>
<keyword id="KW-0406">Ion transport</keyword>
<keyword id="KW-0472">Membrane</keyword>
<keyword id="KW-0547">Nucleotide-binding</keyword>
<keyword id="KW-1185">Reference proteome</keyword>
<keyword id="KW-1278">Translocase</keyword>
<keyword id="KW-0813">Transport</keyword>
<proteinExistence type="inferred from homology"/>
<reference key="1">
    <citation type="journal article" date="2003" name="Nature">
        <title>Unique physiological and pathogenic features of Leptospira interrogans revealed by whole-genome sequencing.</title>
        <authorList>
            <person name="Ren S.-X."/>
            <person name="Fu G."/>
            <person name="Jiang X.-G."/>
            <person name="Zeng R."/>
            <person name="Miao Y.-G."/>
            <person name="Xu H."/>
            <person name="Zhang Y.-X."/>
            <person name="Xiong H."/>
            <person name="Lu G."/>
            <person name="Lu L.-F."/>
            <person name="Jiang H.-Q."/>
            <person name="Jia J."/>
            <person name="Tu Y.-F."/>
            <person name="Jiang J.-X."/>
            <person name="Gu W.-Y."/>
            <person name="Zhang Y.-Q."/>
            <person name="Cai Z."/>
            <person name="Sheng H.-H."/>
            <person name="Yin H.-F."/>
            <person name="Zhang Y."/>
            <person name="Zhu G.-F."/>
            <person name="Wan M."/>
            <person name="Huang H.-L."/>
            <person name="Qian Z."/>
            <person name="Wang S.-Y."/>
            <person name="Ma W."/>
            <person name="Yao Z.-J."/>
            <person name="Shen Y."/>
            <person name="Qiang B.-Q."/>
            <person name="Xia Q.-C."/>
            <person name="Guo X.-K."/>
            <person name="Danchin A."/>
            <person name="Saint Girons I."/>
            <person name="Somerville R.L."/>
            <person name="Wen Y.-M."/>
            <person name="Shi M.-H."/>
            <person name="Chen Z."/>
            <person name="Xu J.-G."/>
            <person name="Zhao G.-P."/>
        </authorList>
    </citation>
    <scope>NUCLEOTIDE SEQUENCE [LARGE SCALE GENOMIC DNA]</scope>
    <source>
        <strain>56601</strain>
    </source>
</reference>
<reference key="2">
    <citation type="submission" date="2010-04" db="EMBL/GenBank/DDBJ databases">
        <authorList>
            <person name="Zhong Y."/>
            <person name="Zheng H.-J."/>
            <person name="Wang S.-Y."/>
            <person name="Guo X.-K."/>
            <person name="Zhao G.-P."/>
        </authorList>
    </citation>
    <scope>SEQUENCE REVISION TO 37</scope>
</reference>
<sequence>MNKGKIKQIIGSVLDIEFENGELPEIYNALEIETNVSGKKETIIAEVQTHIGGKAVRAIALSSTDGLIRGQEVSNTGKPISVPVGDATLGRIFNVLGKTIDEGPAITVKETRPIHRAAPSFDELTSKTEVFETGIKVIDLLAPYIKGGKTGLFGGAGVGKTVLIQELINNIAKQHGGFSVFAGVGERTREGNDLWREMKESGVIDKTVLCYGQMNEPPGARLRVALSALTMAEHFRDSIGTDVLLFVDNIFRFSQAGSEVSALLGRMPSAVGYQPTLSTEMGALQERITSTKKGSITSVQAIYVPADDLTDPAPANAFAHLDATTVLSRAISDKGIYPAVDPLDSTSRVMNAQVLGEEHYLVAREVQRILQRYKDLQDIIAILGMDELSEDDKVLVARARKIEKFLSQPFHVAEVFTGAPGKYVKLADTVRSFKEVISGNYDHLPEQAFYMVGSIDDAIEKAKGYKG</sequence>
<organism>
    <name type="scientific">Leptospira interrogans serogroup Icterohaemorrhagiae serovar Lai (strain 56601)</name>
    <dbReference type="NCBI Taxonomy" id="189518"/>
    <lineage>
        <taxon>Bacteria</taxon>
        <taxon>Pseudomonadati</taxon>
        <taxon>Spirochaetota</taxon>
        <taxon>Spirochaetia</taxon>
        <taxon>Leptospirales</taxon>
        <taxon>Leptospiraceae</taxon>
        <taxon>Leptospira</taxon>
    </lineage>
</organism>
<evidence type="ECO:0000255" key="1">
    <source>
        <dbReference type="HAMAP-Rule" id="MF_01347"/>
    </source>
</evidence>
<dbReference type="EC" id="7.1.2.2" evidence="1"/>
<dbReference type="EMBL" id="AE010300">
    <property type="protein sequence ID" value="AAN49975.2"/>
    <property type="molecule type" value="Genomic_DNA"/>
</dbReference>
<dbReference type="RefSeq" id="NP_712957.2">
    <property type="nucleotide sequence ID" value="NC_004342.2"/>
</dbReference>
<dbReference type="RefSeq" id="WP_001032431.1">
    <property type="nucleotide sequence ID" value="NC_004342.2"/>
</dbReference>
<dbReference type="SMR" id="Q8F2J5"/>
<dbReference type="FunCoup" id="Q8F2J5">
    <property type="interactions" value="366"/>
</dbReference>
<dbReference type="STRING" id="189518.LA_2776"/>
<dbReference type="PaxDb" id="189518-LA_2776"/>
<dbReference type="EnsemblBacteria" id="AAN49975">
    <property type="protein sequence ID" value="AAN49975"/>
    <property type="gene ID" value="LA_2776"/>
</dbReference>
<dbReference type="GeneID" id="61144560"/>
<dbReference type="KEGG" id="lil:LA_2776"/>
<dbReference type="PATRIC" id="fig|189518.3.peg.2758"/>
<dbReference type="HOGENOM" id="CLU_022398_0_2_12"/>
<dbReference type="InParanoid" id="Q8F2J5"/>
<dbReference type="OrthoDB" id="9801639at2"/>
<dbReference type="PRO" id="PR:Q8F2J5"/>
<dbReference type="Proteomes" id="UP000001408">
    <property type="component" value="Chromosome I"/>
</dbReference>
<dbReference type="GO" id="GO:0005886">
    <property type="term" value="C:plasma membrane"/>
    <property type="evidence" value="ECO:0007669"/>
    <property type="project" value="UniProtKB-SubCell"/>
</dbReference>
<dbReference type="GO" id="GO:0045259">
    <property type="term" value="C:proton-transporting ATP synthase complex"/>
    <property type="evidence" value="ECO:0007669"/>
    <property type="project" value="UniProtKB-KW"/>
</dbReference>
<dbReference type="GO" id="GO:0005524">
    <property type="term" value="F:ATP binding"/>
    <property type="evidence" value="ECO:0007669"/>
    <property type="project" value="UniProtKB-UniRule"/>
</dbReference>
<dbReference type="GO" id="GO:0016887">
    <property type="term" value="F:ATP hydrolysis activity"/>
    <property type="evidence" value="ECO:0007669"/>
    <property type="project" value="InterPro"/>
</dbReference>
<dbReference type="GO" id="GO:0046933">
    <property type="term" value="F:proton-transporting ATP synthase activity, rotational mechanism"/>
    <property type="evidence" value="ECO:0007669"/>
    <property type="project" value="UniProtKB-UniRule"/>
</dbReference>
<dbReference type="CDD" id="cd18110">
    <property type="entry name" value="ATP-synt_F1_beta_C"/>
    <property type="match status" value="1"/>
</dbReference>
<dbReference type="CDD" id="cd18115">
    <property type="entry name" value="ATP-synt_F1_beta_N"/>
    <property type="match status" value="1"/>
</dbReference>
<dbReference type="CDD" id="cd01133">
    <property type="entry name" value="F1-ATPase_beta_CD"/>
    <property type="match status" value="1"/>
</dbReference>
<dbReference type="FunFam" id="1.10.1140.10:FF:000001">
    <property type="entry name" value="ATP synthase subunit beta"/>
    <property type="match status" value="1"/>
</dbReference>
<dbReference type="FunFam" id="2.40.10.170:FF:000010">
    <property type="entry name" value="ATP synthase subunit beta"/>
    <property type="match status" value="1"/>
</dbReference>
<dbReference type="FunFam" id="3.40.50.300:FF:000004">
    <property type="entry name" value="ATP synthase subunit beta"/>
    <property type="match status" value="1"/>
</dbReference>
<dbReference type="Gene3D" id="2.40.10.170">
    <property type="match status" value="1"/>
</dbReference>
<dbReference type="Gene3D" id="1.10.1140.10">
    <property type="entry name" value="Bovine Mitochondrial F1-atpase, Atp Synthase Beta Chain, Chain D, domain 3"/>
    <property type="match status" value="1"/>
</dbReference>
<dbReference type="Gene3D" id="3.40.50.300">
    <property type="entry name" value="P-loop containing nucleotide triphosphate hydrolases"/>
    <property type="match status" value="1"/>
</dbReference>
<dbReference type="HAMAP" id="MF_01347">
    <property type="entry name" value="ATP_synth_beta_bact"/>
    <property type="match status" value="1"/>
</dbReference>
<dbReference type="InterPro" id="IPR003593">
    <property type="entry name" value="AAA+_ATPase"/>
</dbReference>
<dbReference type="InterPro" id="IPR055190">
    <property type="entry name" value="ATP-synt_VA_C"/>
</dbReference>
<dbReference type="InterPro" id="IPR005722">
    <property type="entry name" value="ATP_synth_F1_bsu"/>
</dbReference>
<dbReference type="InterPro" id="IPR020003">
    <property type="entry name" value="ATPase_a/bsu_AS"/>
</dbReference>
<dbReference type="InterPro" id="IPR050053">
    <property type="entry name" value="ATPase_alpha/beta_chains"/>
</dbReference>
<dbReference type="InterPro" id="IPR004100">
    <property type="entry name" value="ATPase_F1/V1/A1_a/bsu_N"/>
</dbReference>
<dbReference type="InterPro" id="IPR036121">
    <property type="entry name" value="ATPase_F1/V1/A1_a/bsu_N_sf"/>
</dbReference>
<dbReference type="InterPro" id="IPR000194">
    <property type="entry name" value="ATPase_F1/V1/A1_a/bsu_nucl-bd"/>
</dbReference>
<dbReference type="InterPro" id="IPR024034">
    <property type="entry name" value="ATPase_F1/V1_b/a_C"/>
</dbReference>
<dbReference type="InterPro" id="IPR027417">
    <property type="entry name" value="P-loop_NTPase"/>
</dbReference>
<dbReference type="NCBIfam" id="TIGR01039">
    <property type="entry name" value="atpD"/>
    <property type="match status" value="1"/>
</dbReference>
<dbReference type="PANTHER" id="PTHR15184">
    <property type="entry name" value="ATP SYNTHASE"/>
    <property type="match status" value="1"/>
</dbReference>
<dbReference type="PANTHER" id="PTHR15184:SF71">
    <property type="entry name" value="ATP SYNTHASE SUBUNIT BETA, MITOCHONDRIAL"/>
    <property type="match status" value="1"/>
</dbReference>
<dbReference type="Pfam" id="PF00006">
    <property type="entry name" value="ATP-synt_ab"/>
    <property type="match status" value="1"/>
</dbReference>
<dbReference type="Pfam" id="PF02874">
    <property type="entry name" value="ATP-synt_ab_N"/>
    <property type="match status" value="1"/>
</dbReference>
<dbReference type="Pfam" id="PF22919">
    <property type="entry name" value="ATP-synt_VA_C"/>
    <property type="match status" value="1"/>
</dbReference>
<dbReference type="SMART" id="SM00382">
    <property type="entry name" value="AAA"/>
    <property type="match status" value="1"/>
</dbReference>
<dbReference type="SUPFAM" id="SSF47917">
    <property type="entry name" value="C-terminal domain of alpha and beta subunits of F1 ATP synthase"/>
    <property type="match status" value="1"/>
</dbReference>
<dbReference type="SUPFAM" id="SSF50615">
    <property type="entry name" value="N-terminal domain of alpha and beta subunits of F1 ATP synthase"/>
    <property type="match status" value="1"/>
</dbReference>
<dbReference type="SUPFAM" id="SSF52540">
    <property type="entry name" value="P-loop containing nucleoside triphosphate hydrolases"/>
    <property type="match status" value="1"/>
</dbReference>
<dbReference type="PROSITE" id="PS00152">
    <property type="entry name" value="ATPASE_ALPHA_BETA"/>
    <property type="match status" value="1"/>
</dbReference>
<comment type="function">
    <text evidence="1">Produces ATP from ADP in the presence of a proton gradient across the membrane. The catalytic sites are hosted primarily by the beta subunits.</text>
</comment>
<comment type="catalytic activity">
    <reaction evidence="1">
        <text>ATP + H2O + 4 H(+)(in) = ADP + phosphate + 5 H(+)(out)</text>
        <dbReference type="Rhea" id="RHEA:57720"/>
        <dbReference type="ChEBI" id="CHEBI:15377"/>
        <dbReference type="ChEBI" id="CHEBI:15378"/>
        <dbReference type="ChEBI" id="CHEBI:30616"/>
        <dbReference type="ChEBI" id="CHEBI:43474"/>
        <dbReference type="ChEBI" id="CHEBI:456216"/>
        <dbReference type="EC" id="7.1.2.2"/>
    </reaction>
</comment>
<comment type="subunit">
    <text evidence="1">F-type ATPases have 2 components, CF(1) - the catalytic core - and CF(0) - the membrane proton channel. CF(1) has five subunits: alpha(3), beta(3), gamma(1), delta(1), epsilon(1). CF(0) has three main subunits: a(1), b(2) and c(9-12). The alpha and beta chains form an alternating ring which encloses part of the gamma chain. CF(1) is attached to CF(0) by a central stalk formed by the gamma and epsilon chains, while a peripheral stalk is formed by the delta and b chains.</text>
</comment>
<comment type="subcellular location">
    <subcellularLocation>
        <location evidence="1">Cell inner membrane</location>
        <topology evidence="1">Peripheral membrane protein</topology>
    </subcellularLocation>
</comment>
<comment type="similarity">
    <text evidence="1">Belongs to the ATPase alpha/beta chains family.</text>
</comment>
<protein>
    <recommendedName>
        <fullName evidence="1">ATP synthase subunit beta</fullName>
        <ecNumber evidence="1">7.1.2.2</ecNumber>
    </recommendedName>
    <alternativeName>
        <fullName evidence="1">ATP synthase F1 sector subunit beta</fullName>
    </alternativeName>
    <alternativeName>
        <fullName evidence="1">F-ATPase subunit beta</fullName>
    </alternativeName>
</protein>
<accession>Q8F2J5</accession>
<name>ATPB_LEPIN</name>